<accession>P0C0M8</accession>
<accession>Q8CSW4</accession>
<feature type="chain" id="PRO_0000170609" description="Guanylate kinase">
    <location>
        <begin position="1" status="less than"/>
        <end position="130"/>
    </location>
</feature>
<feature type="domain" description="Guanylate kinase-like" evidence="2">
    <location>
        <begin position="1"/>
        <end position="130"/>
    </location>
</feature>
<feature type="sequence variant" description="In strain: MCL8544.">
    <original>K</original>
    <variation>R</variation>
    <location>
        <position position="109"/>
    </location>
</feature>
<feature type="non-terminal residue">
    <location>
        <position position="1"/>
    </location>
</feature>
<dbReference type="EC" id="2.7.4.8"/>
<dbReference type="EMBL" id="AY163289">
    <property type="protein sequence ID" value="AAO60568.1"/>
    <property type="molecule type" value="Genomic_DNA"/>
</dbReference>
<dbReference type="EMBL" id="AY163290">
    <property type="protein sequence ID" value="AAO60569.1"/>
    <property type="molecule type" value="Genomic_DNA"/>
</dbReference>
<dbReference type="EMBL" id="AY163291">
    <property type="protein sequence ID" value="AAO60570.1"/>
    <property type="molecule type" value="Genomic_DNA"/>
</dbReference>
<dbReference type="EMBL" id="AY163292">
    <property type="protein sequence ID" value="AAO60571.1"/>
    <property type="molecule type" value="Genomic_DNA"/>
</dbReference>
<dbReference type="EMBL" id="AY163293">
    <property type="protein sequence ID" value="AAO60572.1"/>
    <property type="molecule type" value="Genomic_DNA"/>
</dbReference>
<dbReference type="SMR" id="P0C0M8"/>
<dbReference type="GO" id="GO:0005829">
    <property type="term" value="C:cytosol"/>
    <property type="evidence" value="ECO:0007669"/>
    <property type="project" value="TreeGrafter"/>
</dbReference>
<dbReference type="GO" id="GO:0005524">
    <property type="term" value="F:ATP binding"/>
    <property type="evidence" value="ECO:0007669"/>
    <property type="project" value="UniProtKB-KW"/>
</dbReference>
<dbReference type="GO" id="GO:0004385">
    <property type="term" value="F:guanylate kinase activity"/>
    <property type="evidence" value="ECO:0007669"/>
    <property type="project" value="UniProtKB-EC"/>
</dbReference>
<dbReference type="CDD" id="cd00071">
    <property type="entry name" value="GMPK"/>
    <property type="match status" value="1"/>
</dbReference>
<dbReference type="FunFam" id="3.30.63.10:FF:000002">
    <property type="entry name" value="Guanylate kinase 1"/>
    <property type="match status" value="1"/>
</dbReference>
<dbReference type="Gene3D" id="3.30.63.10">
    <property type="entry name" value="Guanylate Kinase phosphate binding domain"/>
    <property type="match status" value="1"/>
</dbReference>
<dbReference type="Gene3D" id="3.40.50.300">
    <property type="entry name" value="P-loop containing nucleotide triphosphate hydrolases"/>
    <property type="match status" value="1"/>
</dbReference>
<dbReference type="InterPro" id="IPR008145">
    <property type="entry name" value="GK/Ca_channel_bsu"/>
</dbReference>
<dbReference type="InterPro" id="IPR008144">
    <property type="entry name" value="Guanylate_kin-like_dom"/>
</dbReference>
<dbReference type="InterPro" id="IPR017665">
    <property type="entry name" value="Guanylate_kinase"/>
</dbReference>
<dbReference type="InterPro" id="IPR020590">
    <property type="entry name" value="Guanylate_kinase_CS"/>
</dbReference>
<dbReference type="InterPro" id="IPR027417">
    <property type="entry name" value="P-loop_NTPase"/>
</dbReference>
<dbReference type="NCBIfam" id="TIGR03263">
    <property type="entry name" value="guanyl_kin"/>
    <property type="match status" value="1"/>
</dbReference>
<dbReference type="PANTHER" id="PTHR23117:SF13">
    <property type="entry name" value="GUANYLATE KINASE"/>
    <property type="match status" value="1"/>
</dbReference>
<dbReference type="PANTHER" id="PTHR23117">
    <property type="entry name" value="GUANYLATE KINASE-RELATED"/>
    <property type="match status" value="1"/>
</dbReference>
<dbReference type="Pfam" id="PF00625">
    <property type="entry name" value="Guanylate_kin"/>
    <property type="match status" value="1"/>
</dbReference>
<dbReference type="SMART" id="SM00072">
    <property type="entry name" value="GuKc"/>
    <property type="match status" value="1"/>
</dbReference>
<dbReference type="SUPFAM" id="SSF52540">
    <property type="entry name" value="P-loop containing nucleoside triphosphate hydrolases"/>
    <property type="match status" value="1"/>
</dbReference>
<dbReference type="PROSITE" id="PS00856">
    <property type="entry name" value="GUANYLATE_KINASE_1"/>
    <property type="match status" value="1"/>
</dbReference>
<dbReference type="PROSITE" id="PS50052">
    <property type="entry name" value="GUANYLATE_KINASE_2"/>
    <property type="match status" value="1"/>
</dbReference>
<reference key="1">
    <citation type="submission" date="2002-10" db="EMBL/GenBank/DDBJ databases">
        <title>Establishment of a multilocus sequence typing system for Staphylococcus epidermidis.</title>
        <authorList>
            <person name="Anderson A.S."/>
            <person name="Wang X.-M."/>
            <person name="McClements W."/>
            <person name="Noble L."/>
            <person name="Jansen K."/>
        </authorList>
    </citation>
    <scope>NUCLEOTIDE SEQUENCE [GENOMIC DNA]</scope>
    <source>
        <strain>MCL13231</strain>
        <strain>MCL8040</strain>
        <strain>MCL8192</strain>
        <strain>MCL8544</strain>
        <strain>MCL8827</strain>
    </source>
</reference>
<protein>
    <recommendedName>
        <fullName>Guanylate kinase</fullName>
        <ecNumber>2.7.4.8</ecNumber>
    </recommendedName>
    <alternativeName>
        <fullName>GMP kinase</fullName>
    </alternativeName>
</protein>
<evidence type="ECO:0000250" key="1"/>
<evidence type="ECO:0000255" key="2">
    <source>
        <dbReference type="PROSITE-ProRule" id="PRU00100"/>
    </source>
</evidence>
<evidence type="ECO:0000305" key="3"/>
<name>KGUA_STAEP</name>
<proteinExistence type="inferred from homology"/>
<sequence length="130" mass="15153">KIFEDPTTSYKYSISMTTRHMREGEIDGVDYFFKTKEEFEALIKDDQFIEYAQYVGNYYGTPVQYVKDTMEEGHDVFLEIEVEGAKQVRKKFPDALFIFLAPPSLDDLKERLVGRGTESDEKIQSRVNEA</sequence>
<comment type="function">
    <text evidence="1">Essential for recycling GMP and indirectly, cGMP.</text>
</comment>
<comment type="catalytic activity">
    <reaction>
        <text>GMP + ATP = GDP + ADP</text>
        <dbReference type="Rhea" id="RHEA:20780"/>
        <dbReference type="ChEBI" id="CHEBI:30616"/>
        <dbReference type="ChEBI" id="CHEBI:58115"/>
        <dbReference type="ChEBI" id="CHEBI:58189"/>
        <dbReference type="ChEBI" id="CHEBI:456216"/>
        <dbReference type="EC" id="2.7.4.8"/>
    </reaction>
</comment>
<comment type="subcellular location">
    <subcellularLocation>
        <location evidence="1">Cytoplasm</location>
    </subcellularLocation>
</comment>
<comment type="similarity">
    <text evidence="3">Belongs to the guanylate kinase family.</text>
</comment>
<gene>
    <name type="primary">gmk</name>
</gene>
<keyword id="KW-0067">ATP-binding</keyword>
<keyword id="KW-0963">Cytoplasm</keyword>
<keyword id="KW-0418">Kinase</keyword>
<keyword id="KW-0547">Nucleotide-binding</keyword>
<keyword id="KW-0808">Transferase</keyword>
<organism>
    <name type="scientific">Staphylococcus epidermidis</name>
    <dbReference type="NCBI Taxonomy" id="1282"/>
    <lineage>
        <taxon>Bacteria</taxon>
        <taxon>Bacillati</taxon>
        <taxon>Bacillota</taxon>
        <taxon>Bacilli</taxon>
        <taxon>Bacillales</taxon>
        <taxon>Staphylococcaceae</taxon>
        <taxon>Staphylococcus</taxon>
    </lineage>
</organism>